<sequence length="1403" mass="156561">MYRSSPFDLGSNITDFDAIRISLASPEKIRSWSHGEVTKPETINYRTFKPERDGLFCARIFGPVTDWECLCGKYKRMKHRGVICDKCGVEVTLSKVRRERLGHIELASPCSHVWFFKGLPSRIGHILDISLRDLESVLYFEAYVVVEPGDAPVKEREVIKDETKFRELDQQYRPTGFKALMGAEAIKELLKRVDAESLSVELREKMKNETSIQKRLKFAKRLKVAEAFRKSTNKPQWMILDVIPVIPPELRPLVPLDGGRFATSDLNDLYRRVINRNNRLKKLMDLHAPEVIVRNEKRMLQEAVDALFDNGRRGRVLRGANNRPLKSLSDTLKGKQGRFRQNLLGKRVDYSGRSVIVVGPELKLHQCGLPKKMALELFKPFIYHRLEQTGHCTTIKQAKELVEQQEPVVWDILEEVIKDHPVLLNRAPTLHRLGIQAFEPVLVEGKAIKIHPLVCTAFNADFDGDQMAVHIPLSPEAQIEASVLMLASHNILSPASGQPITVPTQDMVLGMYYLTKARPGSKGEGRAFANIEEVLLAKEMGEVETLTPIRLRYTGDVMDLTTAYDDQDVTHTEPVPFQRQYINTTVGRAILNDNLRRATAEMPYINGLLKKKGIGNLVNYVYLRFGLEITVQMLDQIKSLGFQYATRSGLSIGIDDMVISPNKAKVVKEAEQTVNSVQQQYLDGAITNGERYNKVVEIWSAITEKVADEMFGNMQQMDKAGEINPIYVMADSGARGSKQQIRQLSGMRGLMAKPSGEIIETPITANFREGLTVLEYFISTHGARKGLADTALKTADSGYLTRRLVDVAQDVIISEYDCGTVDGIYVSSIVESGEIIEPLRDRVIGRVSLEKIKDYEGNVVVDVNQEVTEDLANGIAAAGIERVKIRSVLTCESKRGVCALCYGRNLASGRLVELGEAVGVIAAQSIGEPGTQLTMRTFHIGGTASRVSEQSRLDAKNNGTARFHNLTVVRAKEGHLVVMNRNGAITVIDEKGREKERYAVVYGAKLRVEDGQQVKLGQVMVEWDPYTFAILTEIGGAVGFKDLHEGLTLHEEVDEVTGLSRHVVMDSPDEKRQPAIVIKGAKGTKRYLMPSRAHLMVLDGEEVFPGDVLAKIPRETTKTKDITGGLPRVVELFEARKPRETAVISEIDGTVKFGEVSKGQRKIYVVADDGTEREYSVPRGVHVNVQEGERIQAGEQLMDGPLNPHDILAVLGEKQLQSYLVNEIQEVYRLQGVNISDKHIETIVRQMMRWVKVEDVGDTNFLLEQQVDKFRFRAENEAAIASGGRPATGRPLMLGITKASLSTDSFISAASFQETTRVLTEASINGAVDHLRGLKENVIVGRLIPAGTGMEYYRNVALSPELEAQAQQVQEEVHQAYEEAERALELLRNEGEDETGNEELVAE</sequence>
<accession>Q1IHH5</accession>
<protein>
    <recommendedName>
        <fullName evidence="1">DNA-directed RNA polymerase subunit beta'</fullName>
        <shortName evidence="1">RNAP subunit beta'</shortName>
        <ecNumber evidence="1">2.7.7.6</ecNumber>
    </recommendedName>
    <alternativeName>
        <fullName evidence="1">RNA polymerase subunit beta'</fullName>
    </alternativeName>
    <alternativeName>
        <fullName evidence="1">Transcriptase subunit beta'</fullName>
    </alternativeName>
</protein>
<gene>
    <name evidence="1" type="primary">rpoC</name>
    <name type="ordered locus">Acid345_4675</name>
</gene>
<keyword id="KW-0240">DNA-directed RNA polymerase</keyword>
<keyword id="KW-0460">Magnesium</keyword>
<keyword id="KW-0479">Metal-binding</keyword>
<keyword id="KW-0548">Nucleotidyltransferase</keyword>
<keyword id="KW-1185">Reference proteome</keyword>
<keyword id="KW-0804">Transcription</keyword>
<keyword id="KW-0808">Transferase</keyword>
<keyword id="KW-0862">Zinc</keyword>
<proteinExistence type="inferred from homology"/>
<evidence type="ECO:0000255" key="1">
    <source>
        <dbReference type="HAMAP-Rule" id="MF_01322"/>
    </source>
</evidence>
<evidence type="ECO:0000256" key="2">
    <source>
        <dbReference type="SAM" id="MobiDB-lite"/>
    </source>
</evidence>
<evidence type="ECO:0000305" key="3"/>
<organism>
    <name type="scientific">Koribacter versatilis (strain Ellin345)</name>
    <dbReference type="NCBI Taxonomy" id="204669"/>
    <lineage>
        <taxon>Bacteria</taxon>
        <taxon>Pseudomonadati</taxon>
        <taxon>Acidobacteriota</taxon>
        <taxon>Terriglobia</taxon>
        <taxon>Terriglobales</taxon>
        <taxon>Candidatus Korobacteraceae</taxon>
        <taxon>Candidatus Korobacter</taxon>
    </lineage>
</organism>
<name>RPOC_KORVE</name>
<dbReference type="EC" id="2.7.7.6" evidence="1"/>
<dbReference type="EMBL" id="CP000360">
    <property type="protein sequence ID" value="ABF43675.1"/>
    <property type="status" value="ALT_INIT"/>
    <property type="molecule type" value="Genomic_DNA"/>
</dbReference>
<dbReference type="RefSeq" id="WP_041857196.1">
    <property type="nucleotide sequence ID" value="NC_008009.1"/>
</dbReference>
<dbReference type="SMR" id="Q1IHH5"/>
<dbReference type="STRING" id="204669.Acid345_4675"/>
<dbReference type="EnsemblBacteria" id="ABF43675">
    <property type="protein sequence ID" value="ABF43675"/>
    <property type="gene ID" value="Acid345_4675"/>
</dbReference>
<dbReference type="KEGG" id="aba:Acid345_4675"/>
<dbReference type="eggNOG" id="COG0086">
    <property type="taxonomic scope" value="Bacteria"/>
</dbReference>
<dbReference type="HOGENOM" id="CLU_000524_3_1_0"/>
<dbReference type="OrthoDB" id="9815296at2"/>
<dbReference type="Proteomes" id="UP000002432">
    <property type="component" value="Chromosome"/>
</dbReference>
<dbReference type="GO" id="GO:0000428">
    <property type="term" value="C:DNA-directed RNA polymerase complex"/>
    <property type="evidence" value="ECO:0007669"/>
    <property type="project" value="UniProtKB-KW"/>
</dbReference>
<dbReference type="GO" id="GO:0003677">
    <property type="term" value="F:DNA binding"/>
    <property type="evidence" value="ECO:0007669"/>
    <property type="project" value="UniProtKB-UniRule"/>
</dbReference>
<dbReference type="GO" id="GO:0003899">
    <property type="term" value="F:DNA-directed RNA polymerase activity"/>
    <property type="evidence" value="ECO:0007669"/>
    <property type="project" value="UniProtKB-UniRule"/>
</dbReference>
<dbReference type="GO" id="GO:0000287">
    <property type="term" value="F:magnesium ion binding"/>
    <property type="evidence" value="ECO:0007669"/>
    <property type="project" value="UniProtKB-UniRule"/>
</dbReference>
<dbReference type="GO" id="GO:0008270">
    <property type="term" value="F:zinc ion binding"/>
    <property type="evidence" value="ECO:0007669"/>
    <property type="project" value="UniProtKB-UniRule"/>
</dbReference>
<dbReference type="GO" id="GO:0006351">
    <property type="term" value="P:DNA-templated transcription"/>
    <property type="evidence" value="ECO:0007669"/>
    <property type="project" value="UniProtKB-UniRule"/>
</dbReference>
<dbReference type="CDD" id="cd02655">
    <property type="entry name" value="RNAP_beta'_C"/>
    <property type="match status" value="1"/>
</dbReference>
<dbReference type="CDD" id="cd01609">
    <property type="entry name" value="RNAP_beta'_N"/>
    <property type="match status" value="1"/>
</dbReference>
<dbReference type="FunFam" id="1.10.132.30:FF:000003">
    <property type="entry name" value="DNA-directed RNA polymerase subunit beta"/>
    <property type="match status" value="1"/>
</dbReference>
<dbReference type="FunFam" id="1.10.150.390:FF:000002">
    <property type="entry name" value="DNA-directed RNA polymerase subunit beta"/>
    <property type="match status" value="1"/>
</dbReference>
<dbReference type="Gene3D" id="1.10.132.30">
    <property type="match status" value="1"/>
</dbReference>
<dbReference type="Gene3D" id="1.10.150.390">
    <property type="match status" value="1"/>
</dbReference>
<dbReference type="Gene3D" id="1.10.1790.20">
    <property type="match status" value="1"/>
</dbReference>
<dbReference type="Gene3D" id="1.10.40.90">
    <property type="match status" value="1"/>
</dbReference>
<dbReference type="Gene3D" id="2.40.40.20">
    <property type="match status" value="1"/>
</dbReference>
<dbReference type="Gene3D" id="2.40.50.100">
    <property type="match status" value="3"/>
</dbReference>
<dbReference type="Gene3D" id="4.10.860.120">
    <property type="entry name" value="RNA polymerase II, clamp domain"/>
    <property type="match status" value="1"/>
</dbReference>
<dbReference type="Gene3D" id="1.10.274.100">
    <property type="entry name" value="RNA polymerase Rpb1, domain 3"/>
    <property type="match status" value="1"/>
</dbReference>
<dbReference type="HAMAP" id="MF_01322">
    <property type="entry name" value="RNApol_bact_RpoC"/>
    <property type="match status" value="1"/>
</dbReference>
<dbReference type="InterPro" id="IPR045867">
    <property type="entry name" value="DNA-dir_RpoC_beta_prime"/>
</dbReference>
<dbReference type="InterPro" id="IPR012754">
    <property type="entry name" value="DNA-dir_RpoC_beta_prime_bact"/>
</dbReference>
<dbReference type="InterPro" id="IPR000722">
    <property type="entry name" value="RNA_pol_asu"/>
</dbReference>
<dbReference type="InterPro" id="IPR006592">
    <property type="entry name" value="RNA_pol_N"/>
</dbReference>
<dbReference type="InterPro" id="IPR007080">
    <property type="entry name" value="RNA_pol_Rpb1_1"/>
</dbReference>
<dbReference type="InterPro" id="IPR007066">
    <property type="entry name" value="RNA_pol_Rpb1_3"/>
</dbReference>
<dbReference type="InterPro" id="IPR042102">
    <property type="entry name" value="RNA_pol_Rpb1_3_sf"/>
</dbReference>
<dbReference type="InterPro" id="IPR007083">
    <property type="entry name" value="RNA_pol_Rpb1_4"/>
</dbReference>
<dbReference type="InterPro" id="IPR007081">
    <property type="entry name" value="RNA_pol_Rpb1_5"/>
</dbReference>
<dbReference type="InterPro" id="IPR044893">
    <property type="entry name" value="RNA_pol_Rpb1_clamp_domain"/>
</dbReference>
<dbReference type="InterPro" id="IPR038120">
    <property type="entry name" value="Rpb1_funnel_sf"/>
</dbReference>
<dbReference type="NCBIfam" id="TIGR02386">
    <property type="entry name" value="rpoC_TIGR"/>
    <property type="match status" value="1"/>
</dbReference>
<dbReference type="PANTHER" id="PTHR19376">
    <property type="entry name" value="DNA-DIRECTED RNA POLYMERASE"/>
    <property type="match status" value="1"/>
</dbReference>
<dbReference type="PANTHER" id="PTHR19376:SF54">
    <property type="entry name" value="DNA-DIRECTED RNA POLYMERASE SUBUNIT BETA"/>
    <property type="match status" value="1"/>
</dbReference>
<dbReference type="Pfam" id="PF04997">
    <property type="entry name" value="RNA_pol_Rpb1_1"/>
    <property type="match status" value="1"/>
</dbReference>
<dbReference type="Pfam" id="PF00623">
    <property type="entry name" value="RNA_pol_Rpb1_2"/>
    <property type="match status" value="2"/>
</dbReference>
<dbReference type="Pfam" id="PF04983">
    <property type="entry name" value="RNA_pol_Rpb1_3"/>
    <property type="match status" value="1"/>
</dbReference>
<dbReference type="Pfam" id="PF05000">
    <property type="entry name" value="RNA_pol_Rpb1_4"/>
    <property type="match status" value="1"/>
</dbReference>
<dbReference type="Pfam" id="PF04998">
    <property type="entry name" value="RNA_pol_Rpb1_5"/>
    <property type="match status" value="1"/>
</dbReference>
<dbReference type="SMART" id="SM00663">
    <property type="entry name" value="RPOLA_N"/>
    <property type="match status" value="1"/>
</dbReference>
<dbReference type="SUPFAM" id="SSF64484">
    <property type="entry name" value="beta and beta-prime subunits of DNA dependent RNA-polymerase"/>
    <property type="match status" value="1"/>
</dbReference>
<comment type="function">
    <text evidence="1">DNA-dependent RNA polymerase catalyzes the transcription of DNA into RNA using the four ribonucleoside triphosphates as substrates.</text>
</comment>
<comment type="catalytic activity">
    <reaction evidence="1">
        <text>RNA(n) + a ribonucleoside 5'-triphosphate = RNA(n+1) + diphosphate</text>
        <dbReference type="Rhea" id="RHEA:21248"/>
        <dbReference type="Rhea" id="RHEA-COMP:14527"/>
        <dbReference type="Rhea" id="RHEA-COMP:17342"/>
        <dbReference type="ChEBI" id="CHEBI:33019"/>
        <dbReference type="ChEBI" id="CHEBI:61557"/>
        <dbReference type="ChEBI" id="CHEBI:140395"/>
        <dbReference type="EC" id="2.7.7.6"/>
    </reaction>
</comment>
<comment type="cofactor">
    <cofactor evidence="1">
        <name>Mg(2+)</name>
        <dbReference type="ChEBI" id="CHEBI:18420"/>
    </cofactor>
    <text evidence="1">Binds 1 Mg(2+) ion per subunit.</text>
</comment>
<comment type="cofactor">
    <cofactor evidence="1">
        <name>Zn(2+)</name>
        <dbReference type="ChEBI" id="CHEBI:29105"/>
    </cofactor>
    <text evidence="1">Binds 2 Zn(2+) ions per subunit.</text>
</comment>
<comment type="subunit">
    <text evidence="1">The RNAP catalytic core consists of 2 alpha, 1 beta, 1 beta' and 1 omega subunit. When a sigma factor is associated with the core the holoenzyme is formed, which can initiate transcription.</text>
</comment>
<comment type="similarity">
    <text evidence="1">Belongs to the RNA polymerase beta' chain family.</text>
</comment>
<comment type="sequence caution" evidence="3">
    <conflict type="erroneous initiation">
        <sequence resource="EMBL-CDS" id="ABF43675"/>
    </conflict>
    <text>Extended N-terminus.</text>
</comment>
<feature type="chain" id="PRO_0000353272" description="DNA-directed RNA polymerase subunit beta'">
    <location>
        <begin position="1"/>
        <end position="1403"/>
    </location>
</feature>
<feature type="region of interest" description="Disordered" evidence="2">
    <location>
        <begin position="1384"/>
        <end position="1403"/>
    </location>
</feature>
<feature type="compositionally biased region" description="Acidic residues" evidence="2">
    <location>
        <begin position="1391"/>
        <end position="1403"/>
    </location>
</feature>
<feature type="binding site" evidence="1">
    <location>
        <position position="69"/>
    </location>
    <ligand>
        <name>Zn(2+)</name>
        <dbReference type="ChEBI" id="CHEBI:29105"/>
        <label>1</label>
    </ligand>
</feature>
<feature type="binding site" evidence="1">
    <location>
        <position position="71"/>
    </location>
    <ligand>
        <name>Zn(2+)</name>
        <dbReference type="ChEBI" id="CHEBI:29105"/>
        <label>1</label>
    </ligand>
</feature>
<feature type="binding site" evidence="1">
    <location>
        <position position="84"/>
    </location>
    <ligand>
        <name>Zn(2+)</name>
        <dbReference type="ChEBI" id="CHEBI:29105"/>
        <label>1</label>
    </ligand>
</feature>
<feature type="binding site" evidence="1">
    <location>
        <position position="87"/>
    </location>
    <ligand>
        <name>Zn(2+)</name>
        <dbReference type="ChEBI" id="CHEBI:29105"/>
        <label>1</label>
    </ligand>
</feature>
<feature type="binding site" evidence="1">
    <location>
        <position position="461"/>
    </location>
    <ligand>
        <name>Mg(2+)</name>
        <dbReference type="ChEBI" id="CHEBI:18420"/>
    </ligand>
</feature>
<feature type="binding site" evidence="1">
    <location>
        <position position="463"/>
    </location>
    <ligand>
        <name>Mg(2+)</name>
        <dbReference type="ChEBI" id="CHEBI:18420"/>
    </ligand>
</feature>
<feature type="binding site" evidence="1">
    <location>
        <position position="465"/>
    </location>
    <ligand>
        <name>Mg(2+)</name>
        <dbReference type="ChEBI" id="CHEBI:18420"/>
    </ligand>
</feature>
<feature type="binding site" evidence="1">
    <location>
        <position position="818"/>
    </location>
    <ligand>
        <name>Zn(2+)</name>
        <dbReference type="ChEBI" id="CHEBI:29105"/>
        <label>2</label>
    </ligand>
</feature>
<feature type="binding site" evidence="1">
    <location>
        <position position="891"/>
    </location>
    <ligand>
        <name>Zn(2+)</name>
        <dbReference type="ChEBI" id="CHEBI:29105"/>
        <label>2</label>
    </ligand>
</feature>
<feature type="binding site" evidence="1">
    <location>
        <position position="898"/>
    </location>
    <ligand>
        <name>Zn(2+)</name>
        <dbReference type="ChEBI" id="CHEBI:29105"/>
        <label>2</label>
    </ligand>
</feature>
<feature type="binding site" evidence="1">
    <location>
        <position position="901"/>
    </location>
    <ligand>
        <name>Zn(2+)</name>
        <dbReference type="ChEBI" id="CHEBI:29105"/>
        <label>2</label>
    </ligand>
</feature>
<reference key="1">
    <citation type="journal article" date="2009" name="Appl. Environ. Microbiol.">
        <title>Three genomes from the phylum Acidobacteria provide insight into the lifestyles of these microorganisms in soils.</title>
        <authorList>
            <person name="Ward N.L."/>
            <person name="Challacombe J.F."/>
            <person name="Janssen P.H."/>
            <person name="Henrissat B."/>
            <person name="Coutinho P.M."/>
            <person name="Wu M."/>
            <person name="Xie G."/>
            <person name="Haft D.H."/>
            <person name="Sait M."/>
            <person name="Badger J."/>
            <person name="Barabote R.D."/>
            <person name="Bradley B."/>
            <person name="Brettin T.S."/>
            <person name="Brinkac L.M."/>
            <person name="Bruce D."/>
            <person name="Creasy T."/>
            <person name="Daugherty S.C."/>
            <person name="Davidsen T.M."/>
            <person name="DeBoy R.T."/>
            <person name="Detter J.C."/>
            <person name="Dodson R.J."/>
            <person name="Durkin A.S."/>
            <person name="Ganapathy A."/>
            <person name="Gwinn-Giglio M."/>
            <person name="Han C.S."/>
            <person name="Khouri H."/>
            <person name="Kiss H."/>
            <person name="Kothari S.P."/>
            <person name="Madupu R."/>
            <person name="Nelson K.E."/>
            <person name="Nelson W.C."/>
            <person name="Paulsen I."/>
            <person name="Penn K."/>
            <person name="Ren Q."/>
            <person name="Rosovitz M.J."/>
            <person name="Selengut J.D."/>
            <person name="Shrivastava S."/>
            <person name="Sullivan S.A."/>
            <person name="Tapia R."/>
            <person name="Thompson L.S."/>
            <person name="Watkins K.L."/>
            <person name="Yang Q."/>
            <person name="Yu C."/>
            <person name="Zafar N."/>
            <person name="Zhou L."/>
            <person name="Kuske C.R."/>
        </authorList>
    </citation>
    <scope>NUCLEOTIDE SEQUENCE [LARGE SCALE GENOMIC DNA]</scope>
    <source>
        <strain>Ellin345</strain>
    </source>
</reference>